<sequence>HLQEDKKCFICDSEDPFHDTLNPDSHRIENVVTTFAPNRLKLWWQSENGLENVTIQLNLEAEFHFTHLIMTFKTFRPAAMLIERSSDFGKTWQVYRYFAYDCESSFPGISTGPMKKVDDIICDSRYSDIEPSTEGEVIYRVLDPAFRIEDPYSPRIQNLLKITNLRVKFTKLHTLGDNLLDSRMEIREKYYYAIYDMVVRGNCFCYGHASECAPVEGFSEEVEGMVHGHCMCRHNTKGLNCEQCLDFYHDLPWRPAEGRNSNACKKCNCNGHSTQCHFDMAVYMATGNTSGGVCDDCQHNTGG</sequence>
<gene>
    <name type="primary">LAMB1</name>
</gene>
<organism>
    <name type="scientific">Gallus gallus</name>
    <name type="common">Chicken</name>
    <dbReference type="NCBI Taxonomy" id="9031"/>
    <lineage>
        <taxon>Eukaryota</taxon>
        <taxon>Metazoa</taxon>
        <taxon>Chordata</taxon>
        <taxon>Craniata</taxon>
        <taxon>Vertebrata</taxon>
        <taxon>Euteleostomi</taxon>
        <taxon>Archelosauria</taxon>
        <taxon>Archosauria</taxon>
        <taxon>Dinosauria</taxon>
        <taxon>Saurischia</taxon>
        <taxon>Theropoda</taxon>
        <taxon>Coelurosauria</taxon>
        <taxon>Aves</taxon>
        <taxon>Neognathae</taxon>
        <taxon>Galloanserae</taxon>
        <taxon>Galliformes</taxon>
        <taxon>Phasianidae</taxon>
        <taxon>Phasianinae</taxon>
        <taxon>Gallus</taxon>
    </lineage>
</organism>
<reference key="1">
    <citation type="journal article" date="1992" name="J. Biol. Chem.">
        <title>A novel laminin B1 chain variant in avian eye.</title>
        <authorList>
            <person name="O'Rear J.J."/>
        </authorList>
    </citation>
    <scope>NUCLEOTIDE SEQUENCE [MRNA]</scope>
    <source>
        <tissue>Eye</tissue>
    </source>
</reference>
<reference key="2">
    <citation type="journal article" date="2021" name="J. Cachexia Sarcopenia Muscle">
        <title>TMEM182 interacts with integrin beta 1 and regulates myoblast differentiation and muscle regeneration.</title>
        <authorList>
            <person name="Luo W."/>
            <person name="Lin Z."/>
            <person name="Chen J."/>
            <person name="Chen G."/>
            <person name="Zhang S."/>
            <person name="Liu M."/>
            <person name="Li H."/>
            <person name="He D."/>
            <person name="Liang S."/>
            <person name="Luo Q."/>
            <person name="Zhang D."/>
            <person name="Nie Q."/>
            <person name="Zhang X."/>
        </authorList>
    </citation>
    <scope>INTERACTION WITH ITGB1</scope>
</reference>
<comment type="function">
    <text>Binding to cells via a high affinity receptor, laminin is thought to mediate the attachment, migration and organization of cells into tissues during embryonic development by interacting with other extracellular matrix components.</text>
</comment>
<comment type="subunit">
    <text evidence="1 5">Laminin is a complex glycoprotein, consisting of three different polypeptide chains (alpha, beta, gamma), which are bound to each other by disulfide bonds into a cross-shaped molecule comprising one long and three short arms with globules at each end. Beta-1 is a subunit of laminin-1 (laminin-111 or EHS laminin), laminin-2 (laminin-211 or merosin), laminin-6 (laminin-311 or K-laminin), laminin-8 (laminin-411), laminin-10 (laminin-511) and laminin-12 (laminin-213) (By similarity). Interacts with ITGB1 (PubMed:34427057).</text>
</comment>
<comment type="subcellular location">
    <subcellularLocation>
        <location>Secreted</location>
        <location>Extracellular space</location>
        <location>Extracellular matrix</location>
        <location>Basement membrane</location>
    </subcellularLocation>
    <text>Major component.</text>
</comment>
<evidence type="ECO:0000250" key="1"/>
<evidence type="ECO:0000255" key="2"/>
<evidence type="ECO:0000255" key="3">
    <source>
        <dbReference type="PROSITE-ProRule" id="PRU00460"/>
    </source>
</evidence>
<evidence type="ECO:0000255" key="4">
    <source>
        <dbReference type="PROSITE-ProRule" id="PRU00466"/>
    </source>
</evidence>
<evidence type="ECO:0000269" key="5">
    <source>
    </source>
</evidence>
<accession>Q01635</accession>
<feature type="chain" id="PRO_0000086853" description="Laminin subunit beta-1">
    <location>
        <begin position="1" status="less than"/>
        <end position="303" status="greater than"/>
    </location>
</feature>
<feature type="domain" description="Laminin N-terminal" evidence="4">
    <location>
        <begin position="1" status="less than"/>
        <end position="202"/>
    </location>
</feature>
<feature type="domain" description="Laminin EGF-like 1" evidence="3">
    <location>
        <begin position="203"/>
        <end position="266"/>
    </location>
</feature>
<feature type="domain" description="Laminin EGF-like 2" evidence="3">
    <location>
        <begin position="267"/>
        <end position="303" status="greater than"/>
    </location>
</feature>
<feature type="region of interest" description="Domain V" evidence="1">
    <location>
        <begin position="202"/>
        <end position="303" status="greater than"/>
    </location>
</feature>
<feature type="glycosylation site" description="N-linked (GlcNAc...) asparagine" evidence="2">
    <location>
        <position position="52"/>
    </location>
</feature>
<feature type="glycosylation site" description="N-linked (GlcNAc...) asparagine" evidence="2">
    <location>
        <position position="288"/>
    </location>
</feature>
<feature type="disulfide bond" evidence="3">
    <location>
        <begin position="203"/>
        <end position="212"/>
    </location>
</feature>
<feature type="disulfide bond" evidence="3">
    <location>
        <begin position="205"/>
        <end position="230"/>
    </location>
</feature>
<feature type="disulfide bond" evidence="3">
    <location>
        <begin position="232"/>
        <end position="241"/>
    </location>
</feature>
<feature type="disulfide bond" evidence="3">
    <location>
        <begin position="244"/>
        <end position="264"/>
    </location>
</feature>
<feature type="disulfide bond" evidence="3">
    <location>
        <begin position="267"/>
        <end position="276"/>
    </location>
</feature>
<feature type="disulfide bond" evidence="3">
    <location>
        <begin position="269"/>
        <end position="294"/>
    </location>
</feature>
<feature type="non-terminal residue">
    <location>
        <position position="1"/>
    </location>
</feature>
<feature type="non-terminal residue">
    <location>
        <position position="303"/>
    </location>
</feature>
<name>LAMB1_CHICK</name>
<proteinExistence type="evidence at protein level"/>
<dbReference type="EMBL" id="L00962">
    <property type="protein sequence ID" value="AAA48935.1"/>
    <property type="molecule type" value="mRNA"/>
</dbReference>
<dbReference type="PIR" id="B45067">
    <property type="entry name" value="B45067"/>
</dbReference>
<dbReference type="SMR" id="Q01635"/>
<dbReference type="FunCoup" id="Q01635">
    <property type="interactions" value="1551"/>
</dbReference>
<dbReference type="STRING" id="9031.ENSGALP00000012817"/>
<dbReference type="GlyCosmos" id="Q01635">
    <property type="glycosylation" value="2 sites, No reported glycans"/>
</dbReference>
<dbReference type="GlyGen" id="Q01635">
    <property type="glycosylation" value="2 sites"/>
</dbReference>
<dbReference type="PaxDb" id="9031-ENSGALP00000012817"/>
<dbReference type="VEuPathDB" id="HostDB:geneid_396478"/>
<dbReference type="eggNOG" id="KOG0994">
    <property type="taxonomic scope" value="Eukaryota"/>
</dbReference>
<dbReference type="InParanoid" id="Q01635"/>
<dbReference type="OrthoDB" id="5985440at2759"/>
<dbReference type="PhylomeDB" id="Q01635"/>
<dbReference type="Proteomes" id="UP000000539">
    <property type="component" value="Unassembled WGS sequence"/>
</dbReference>
<dbReference type="GO" id="GO:0005604">
    <property type="term" value="C:basement membrane"/>
    <property type="evidence" value="ECO:0000250"/>
    <property type="project" value="AgBase"/>
</dbReference>
<dbReference type="GO" id="GO:0005615">
    <property type="term" value="C:extracellular space"/>
    <property type="evidence" value="ECO:0000250"/>
    <property type="project" value="AgBase"/>
</dbReference>
<dbReference type="GO" id="GO:0043256">
    <property type="term" value="C:laminin complex"/>
    <property type="evidence" value="ECO:0000318"/>
    <property type="project" value="GO_Central"/>
</dbReference>
<dbReference type="GO" id="GO:0005606">
    <property type="term" value="C:laminin-1 complex"/>
    <property type="evidence" value="ECO:0000250"/>
    <property type="project" value="AgBase"/>
</dbReference>
<dbReference type="GO" id="GO:0043259">
    <property type="term" value="C:laminin-10 complex"/>
    <property type="evidence" value="ECO:0000250"/>
    <property type="project" value="AgBase"/>
</dbReference>
<dbReference type="GO" id="GO:0005607">
    <property type="term" value="C:laminin-2 complex"/>
    <property type="evidence" value="ECO:0000250"/>
    <property type="project" value="AgBase"/>
</dbReference>
<dbReference type="GO" id="GO:0043257">
    <property type="term" value="C:laminin-8 complex"/>
    <property type="evidence" value="ECO:0000250"/>
    <property type="project" value="AgBase"/>
</dbReference>
<dbReference type="GO" id="GO:0048471">
    <property type="term" value="C:perinuclear region of cytoplasm"/>
    <property type="evidence" value="ECO:0000250"/>
    <property type="project" value="AgBase"/>
</dbReference>
<dbReference type="GO" id="GO:0005201">
    <property type="term" value="F:extracellular matrix structural constituent"/>
    <property type="evidence" value="ECO:0000250"/>
    <property type="project" value="AgBase"/>
</dbReference>
<dbReference type="GO" id="GO:0005178">
    <property type="term" value="F:integrin binding"/>
    <property type="evidence" value="ECO:0000318"/>
    <property type="project" value="GO_Central"/>
</dbReference>
<dbReference type="GO" id="GO:0009887">
    <property type="term" value="P:animal organ morphogenesis"/>
    <property type="evidence" value="ECO:0000318"/>
    <property type="project" value="GO_Central"/>
</dbReference>
<dbReference type="GO" id="GO:0007411">
    <property type="term" value="P:axon guidance"/>
    <property type="evidence" value="ECO:0000318"/>
    <property type="project" value="GO_Central"/>
</dbReference>
<dbReference type="GO" id="GO:0070831">
    <property type="term" value="P:basement membrane assembly"/>
    <property type="evidence" value="ECO:0000318"/>
    <property type="project" value="GO_Central"/>
</dbReference>
<dbReference type="GO" id="GO:0016477">
    <property type="term" value="P:cell migration"/>
    <property type="evidence" value="ECO:0000318"/>
    <property type="project" value="GO_Central"/>
</dbReference>
<dbReference type="GO" id="GO:0007162">
    <property type="term" value="P:negative regulation of cell adhesion"/>
    <property type="evidence" value="ECO:0000250"/>
    <property type="project" value="AgBase"/>
</dbReference>
<dbReference type="GO" id="GO:0031175">
    <property type="term" value="P:neuron projection development"/>
    <property type="evidence" value="ECO:0000250"/>
    <property type="project" value="AgBase"/>
</dbReference>
<dbReference type="GO" id="GO:0030335">
    <property type="term" value="P:positive regulation of cell migration"/>
    <property type="evidence" value="ECO:0000250"/>
    <property type="project" value="AgBase"/>
</dbReference>
<dbReference type="GO" id="GO:0034446">
    <property type="term" value="P:substrate adhesion-dependent cell spreading"/>
    <property type="evidence" value="ECO:0000250"/>
    <property type="project" value="AgBase"/>
</dbReference>
<dbReference type="GO" id="GO:0009888">
    <property type="term" value="P:tissue development"/>
    <property type="evidence" value="ECO:0000318"/>
    <property type="project" value="GO_Central"/>
</dbReference>
<dbReference type="CDD" id="cd00055">
    <property type="entry name" value="EGF_Lam"/>
    <property type="match status" value="1"/>
</dbReference>
<dbReference type="FunFam" id="2.60.120.260:FF:000010">
    <property type="entry name" value="Laminin subunit beta 1"/>
    <property type="match status" value="1"/>
</dbReference>
<dbReference type="FunFam" id="2.170.300.10:FF:000001">
    <property type="entry name" value="Laminin subunit beta-1"/>
    <property type="match status" value="1"/>
</dbReference>
<dbReference type="Gene3D" id="2.60.120.260">
    <property type="entry name" value="Galactose-binding domain-like"/>
    <property type="match status" value="1"/>
</dbReference>
<dbReference type="Gene3D" id="2.170.300.10">
    <property type="entry name" value="Tie2 ligand-binding domain superfamily"/>
    <property type="match status" value="1"/>
</dbReference>
<dbReference type="InterPro" id="IPR050440">
    <property type="entry name" value="Laminin/Netrin_ECM"/>
</dbReference>
<dbReference type="InterPro" id="IPR008211">
    <property type="entry name" value="Laminin_N"/>
</dbReference>
<dbReference type="InterPro" id="IPR002049">
    <property type="entry name" value="LE_dom"/>
</dbReference>
<dbReference type="PANTHER" id="PTHR10574:SF233">
    <property type="entry name" value="LAMININ SUBUNIT BETA-1"/>
    <property type="match status" value="1"/>
</dbReference>
<dbReference type="PANTHER" id="PTHR10574">
    <property type="entry name" value="NETRIN/LAMININ-RELATED"/>
    <property type="match status" value="1"/>
</dbReference>
<dbReference type="Pfam" id="PF00053">
    <property type="entry name" value="EGF_laminin"/>
    <property type="match status" value="1"/>
</dbReference>
<dbReference type="Pfam" id="PF00055">
    <property type="entry name" value="Laminin_N"/>
    <property type="match status" value="1"/>
</dbReference>
<dbReference type="SMART" id="SM00180">
    <property type="entry name" value="EGF_Lam"/>
    <property type="match status" value="1"/>
</dbReference>
<dbReference type="SMART" id="SM00136">
    <property type="entry name" value="LamNT"/>
    <property type="match status" value="1"/>
</dbReference>
<dbReference type="SUPFAM" id="SSF57196">
    <property type="entry name" value="EGF/Laminin"/>
    <property type="match status" value="1"/>
</dbReference>
<dbReference type="PROSITE" id="PS00022">
    <property type="entry name" value="EGF_1"/>
    <property type="match status" value="1"/>
</dbReference>
<dbReference type="PROSITE" id="PS01248">
    <property type="entry name" value="EGF_LAM_1"/>
    <property type="match status" value="1"/>
</dbReference>
<dbReference type="PROSITE" id="PS50027">
    <property type="entry name" value="EGF_LAM_2"/>
    <property type="match status" value="2"/>
</dbReference>
<dbReference type="PROSITE" id="PS51117">
    <property type="entry name" value="LAMININ_NTER"/>
    <property type="match status" value="1"/>
</dbReference>
<keyword id="KW-0084">Basement membrane</keyword>
<keyword id="KW-0130">Cell adhesion</keyword>
<keyword id="KW-1015">Disulfide bond</keyword>
<keyword id="KW-0272">Extracellular matrix</keyword>
<keyword id="KW-0325">Glycoprotein</keyword>
<keyword id="KW-0424">Laminin EGF-like domain</keyword>
<keyword id="KW-1185">Reference proteome</keyword>
<keyword id="KW-0677">Repeat</keyword>
<keyword id="KW-0964">Secreted</keyword>
<protein>
    <recommendedName>
        <fullName>Laminin subunit beta-1</fullName>
    </recommendedName>
    <alternativeName>
        <fullName>Laminin beta-1-1 chain</fullName>
    </alternativeName>
    <alternativeName>
        <fullName>Laminin-1 subunit beta</fullName>
    </alternativeName>
    <alternativeName>
        <fullName>Laminin-10 subunit beta</fullName>
    </alternativeName>
    <alternativeName>
        <fullName>Laminin-12 subunit beta</fullName>
    </alternativeName>
    <alternativeName>
        <fullName>Laminin-2 subunit beta</fullName>
    </alternativeName>
    <alternativeName>
        <fullName>Laminin-6 subunit beta</fullName>
    </alternativeName>
    <alternativeName>
        <fullName>Laminin-8 subunit beta</fullName>
    </alternativeName>
</protein>